<proteinExistence type="inferred from homology"/>
<gene>
    <name evidence="1" type="primary">hslU</name>
    <name type="ordered locus">EFER_3841</name>
</gene>
<reference key="1">
    <citation type="journal article" date="2009" name="PLoS Genet.">
        <title>Organised genome dynamics in the Escherichia coli species results in highly diverse adaptive paths.</title>
        <authorList>
            <person name="Touchon M."/>
            <person name="Hoede C."/>
            <person name="Tenaillon O."/>
            <person name="Barbe V."/>
            <person name="Baeriswyl S."/>
            <person name="Bidet P."/>
            <person name="Bingen E."/>
            <person name="Bonacorsi S."/>
            <person name="Bouchier C."/>
            <person name="Bouvet O."/>
            <person name="Calteau A."/>
            <person name="Chiapello H."/>
            <person name="Clermont O."/>
            <person name="Cruveiller S."/>
            <person name="Danchin A."/>
            <person name="Diard M."/>
            <person name="Dossat C."/>
            <person name="Karoui M.E."/>
            <person name="Frapy E."/>
            <person name="Garry L."/>
            <person name="Ghigo J.M."/>
            <person name="Gilles A.M."/>
            <person name="Johnson J."/>
            <person name="Le Bouguenec C."/>
            <person name="Lescat M."/>
            <person name="Mangenot S."/>
            <person name="Martinez-Jehanne V."/>
            <person name="Matic I."/>
            <person name="Nassif X."/>
            <person name="Oztas S."/>
            <person name="Petit M.A."/>
            <person name="Pichon C."/>
            <person name="Rouy Z."/>
            <person name="Ruf C.S."/>
            <person name="Schneider D."/>
            <person name="Tourret J."/>
            <person name="Vacherie B."/>
            <person name="Vallenet D."/>
            <person name="Medigue C."/>
            <person name="Rocha E.P.C."/>
            <person name="Denamur E."/>
        </authorList>
    </citation>
    <scope>NUCLEOTIDE SEQUENCE [LARGE SCALE GENOMIC DNA]</scope>
    <source>
        <strain>ATCC 35469 / DSM 13698 / BCRC 15582 / CCUG 18766 / IAM 14443 / JCM 21226 / LMG 7866 / NBRC 102419 / NCTC 12128 / CDC 0568-73</strain>
    </source>
</reference>
<feature type="chain" id="PRO_1000119107" description="ATP-dependent protease ATPase subunit HslU">
    <location>
        <begin position="1"/>
        <end position="443"/>
    </location>
</feature>
<feature type="binding site" evidence="1">
    <location>
        <position position="18"/>
    </location>
    <ligand>
        <name>ATP</name>
        <dbReference type="ChEBI" id="CHEBI:30616"/>
    </ligand>
</feature>
<feature type="binding site" evidence="1">
    <location>
        <begin position="60"/>
        <end position="65"/>
    </location>
    <ligand>
        <name>ATP</name>
        <dbReference type="ChEBI" id="CHEBI:30616"/>
    </ligand>
</feature>
<feature type="binding site" evidence="1">
    <location>
        <position position="256"/>
    </location>
    <ligand>
        <name>ATP</name>
        <dbReference type="ChEBI" id="CHEBI:30616"/>
    </ligand>
</feature>
<feature type="binding site" evidence="1">
    <location>
        <position position="321"/>
    </location>
    <ligand>
        <name>ATP</name>
        <dbReference type="ChEBI" id="CHEBI:30616"/>
    </ligand>
</feature>
<feature type="binding site" evidence="1">
    <location>
        <position position="393"/>
    </location>
    <ligand>
        <name>ATP</name>
        <dbReference type="ChEBI" id="CHEBI:30616"/>
    </ligand>
</feature>
<keyword id="KW-0067">ATP-binding</keyword>
<keyword id="KW-0143">Chaperone</keyword>
<keyword id="KW-0963">Cytoplasm</keyword>
<keyword id="KW-0547">Nucleotide-binding</keyword>
<keyword id="KW-0346">Stress response</keyword>
<name>HSLU_ESCF3</name>
<comment type="function">
    <text evidence="1">ATPase subunit of a proteasome-like degradation complex; this subunit has chaperone activity. The binding of ATP and its subsequent hydrolysis by HslU are essential for unfolding of protein substrates subsequently hydrolyzed by HslV. HslU recognizes the N-terminal part of its protein substrates and unfolds these before they are guided to HslV for hydrolysis.</text>
</comment>
<comment type="subunit">
    <text evidence="1">A double ring-shaped homohexamer of HslV is capped on each side by a ring-shaped HslU homohexamer. The assembly of the HslU/HslV complex is dependent on binding of ATP.</text>
</comment>
<comment type="subcellular location">
    <subcellularLocation>
        <location evidence="1">Cytoplasm</location>
    </subcellularLocation>
</comment>
<comment type="induction">
    <text evidence="1">By heat shock.</text>
</comment>
<comment type="similarity">
    <text evidence="1">Belongs to the ClpX chaperone family. HslU subfamily.</text>
</comment>
<dbReference type="EMBL" id="CU928158">
    <property type="protein sequence ID" value="CAQ91276.1"/>
    <property type="molecule type" value="Genomic_DNA"/>
</dbReference>
<dbReference type="RefSeq" id="WP_001293345.1">
    <property type="nucleotide sequence ID" value="NC_011740.1"/>
</dbReference>
<dbReference type="SMR" id="B7LUS3"/>
<dbReference type="GeneID" id="75059436"/>
<dbReference type="KEGG" id="efe:EFER_3841"/>
<dbReference type="HOGENOM" id="CLU_033123_0_0_6"/>
<dbReference type="OrthoDB" id="9804062at2"/>
<dbReference type="Proteomes" id="UP000000745">
    <property type="component" value="Chromosome"/>
</dbReference>
<dbReference type="GO" id="GO:0009376">
    <property type="term" value="C:HslUV protease complex"/>
    <property type="evidence" value="ECO:0007669"/>
    <property type="project" value="UniProtKB-UniRule"/>
</dbReference>
<dbReference type="GO" id="GO:0005524">
    <property type="term" value="F:ATP binding"/>
    <property type="evidence" value="ECO:0007669"/>
    <property type="project" value="UniProtKB-UniRule"/>
</dbReference>
<dbReference type="GO" id="GO:0016887">
    <property type="term" value="F:ATP hydrolysis activity"/>
    <property type="evidence" value="ECO:0007669"/>
    <property type="project" value="InterPro"/>
</dbReference>
<dbReference type="GO" id="GO:0008233">
    <property type="term" value="F:peptidase activity"/>
    <property type="evidence" value="ECO:0007669"/>
    <property type="project" value="InterPro"/>
</dbReference>
<dbReference type="GO" id="GO:0036402">
    <property type="term" value="F:proteasome-activating activity"/>
    <property type="evidence" value="ECO:0007669"/>
    <property type="project" value="UniProtKB-UniRule"/>
</dbReference>
<dbReference type="GO" id="GO:0043335">
    <property type="term" value="P:protein unfolding"/>
    <property type="evidence" value="ECO:0007669"/>
    <property type="project" value="UniProtKB-UniRule"/>
</dbReference>
<dbReference type="GO" id="GO:0051603">
    <property type="term" value="P:proteolysis involved in protein catabolic process"/>
    <property type="evidence" value="ECO:0007669"/>
    <property type="project" value="TreeGrafter"/>
</dbReference>
<dbReference type="CDD" id="cd19498">
    <property type="entry name" value="RecA-like_HslU"/>
    <property type="match status" value="1"/>
</dbReference>
<dbReference type="FunFam" id="1.10.8.10:FF:000012">
    <property type="entry name" value="ATP-dependent protease ATPase subunit HslU"/>
    <property type="match status" value="1"/>
</dbReference>
<dbReference type="FunFam" id="1.10.8.10:FF:000028">
    <property type="entry name" value="ATP-dependent protease ATPase subunit HslU"/>
    <property type="match status" value="1"/>
</dbReference>
<dbReference type="FunFam" id="1.10.8.60:FF:000027">
    <property type="entry name" value="ATP-dependent protease ATPase subunit HslU"/>
    <property type="match status" value="1"/>
</dbReference>
<dbReference type="FunFam" id="3.40.50.300:FF:000213">
    <property type="entry name" value="ATP-dependent protease ATPase subunit HslU"/>
    <property type="match status" value="1"/>
</dbReference>
<dbReference type="FunFam" id="3.40.50.300:FF:000220">
    <property type="entry name" value="ATP-dependent protease ATPase subunit HslU"/>
    <property type="match status" value="1"/>
</dbReference>
<dbReference type="Gene3D" id="1.10.8.60">
    <property type="match status" value="1"/>
</dbReference>
<dbReference type="Gene3D" id="1.10.8.10">
    <property type="entry name" value="DNA helicase RuvA subunit, C-terminal domain"/>
    <property type="match status" value="2"/>
</dbReference>
<dbReference type="Gene3D" id="3.40.50.300">
    <property type="entry name" value="P-loop containing nucleotide triphosphate hydrolases"/>
    <property type="match status" value="1"/>
</dbReference>
<dbReference type="HAMAP" id="MF_00249">
    <property type="entry name" value="HslU"/>
    <property type="match status" value="1"/>
</dbReference>
<dbReference type="InterPro" id="IPR003593">
    <property type="entry name" value="AAA+_ATPase"/>
</dbReference>
<dbReference type="InterPro" id="IPR050052">
    <property type="entry name" value="ATP-dep_Clp_protease_ClpX"/>
</dbReference>
<dbReference type="InterPro" id="IPR003959">
    <property type="entry name" value="ATPase_AAA_core"/>
</dbReference>
<dbReference type="InterPro" id="IPR019489">
    <property type="entry name" value="Clp_ATPase_C"/>
</dbReference>
<dbReference type="InterPro" id="IPR004491">
    <property type="entry name" value="HslU"/>
</dbReference>
<dbReference type="InterPro" id="IPR027417">
    <property type="entry name" value="P-loop_NTPase"/>
</dbReference>
<dbReference type="NCBIfam" id="TIGR00390">
    <property type="entry name" value="hslU"/>
    <property type="match status" value="1"/>
</dbReference>
<dbReference type="NCBIfam" id="NF003544">
    <property type="entry name" value="PRK05201.1"/>
    <property type="match status" value="1"/>
</dbReference>
<dbReference type="PANTHER" id="PTHR48102">
    <property type="entry name" value="ATP-DEPENDENT CLP PROTEASE ATP-BINDING SUBUNIT CLPX-LIKE, MITOCHONDRIAL-RELATED"/>
    <property type="match status" value="1"/>
</dbReference>
<dbReference type="PANTHER" id="PTHR48102:SF3">
    <property type="entry name" value="ATP-DEPENDENT PROTEASE ATPASE SUBUNIT HSLU"/>
    <property type="match status" value="1"/>
</dbReference>
<dbReference type="Pfam" id="PF00004">
    <property type="entry name" value="AAA"/>
    <property type="match status" value="1"/>
</dbReference>
<dbReference type="Pfam" id="PF07724">
    <property type="entry name" value="AAA_2"/>
    <property type="match status" value="1"/>
</dbReference>
<dbReference type="SMART" id="SM00382">
    <property type="entry name" value="AAA"/>
    <property type="match status" value="1"/>
</dbReference>
<dbReference type="SMART" id="SM01086">
    <property type="entry name" value="ClpB_D2-small"/>
    <property type="match status" value="1"/>
</dbReference>
<dbReference type="SUPFAM" id="SSF52540">
    <property type="entry name" value="P-loop containing nucleoside triphosphate hydrolases"/>
    <property type="match status" value="1"/>
</dbReference>
<accession>B7LUS3</accession>
<protein>
    <recommendedName>
        <fullName evidence="1">ATP-dependent protease ATPase subunit HslU</fullName>
    </recommendedName>
    <alternativeName>
        <fullName evidence="1">Heat shock protein HslU</fullName>
    </alternativeName>
    <alternativeName>
        <fullName evidence="1">Unfoldase HslU</fullName>
    </alternativeName>
</protein>
<evidence type="ECO:0000255" key="1">
    <source>
        <dbReference type="HAMAP-Rule" id="MF_00249"/>
    </source>
</evidence>
<organism>
    <name type="scientific">Escherichia fergusonii (strain ATCC 35469 / DSM 13698 / CCUG 18766 / IAM 14443 / JCM 21226 / LMG 7866 / NBRC 102419 / NCTC 12128 / CDC 0568-73)</name>
    <dbReference type="NCBI Taxonomy" id="585054"/>
    <lineage>
        <taxon>Bacteria</taxon>
        <taxon>Pseudomonadati</taxon>
        <taxon>Pseudomonadota</taxon>
        <taxon>Gammaproteobacteria</taxon>
        <taxon>Enterobacterales</taxon>
        <taxon>Enterobacteriaceae</taxon>
        <taxon>Escherichia</taxon>
    </lineage>
</organism>
<sequence length="443" mass="49581">MSEMTPREIVSELDKHIIGQDNAKRSVAIALRNRWRRMQLNEELRHEVTPKNILMIGPTGVGKTEIARRLAKLANAPFIKVEATKFTEVGYVGKEVDSIIRDLTDAAVKMVRVQAIEKNRYRAEELAEERILDVLIPPAKNNWGQTEQQQEPSAARQAFRKKLREGQLDDKEIEIDLAAAPMGVEIMAPPGMEEMTSQLQSMFQNLGGQKQKARKLKIKDAMKLLIEEEAAKLVNPEELKQDAIDAVEQHGIVFIDEIDKICKRGESSGPDVSREGVQRDLLPLVEGCTVSTKHGMVKTDHILFIASGAFQIAKPSDLIPELQGRLPIRVELQALTTSDFERILTEPNASITVQYKALMATEGVNIEFTESGIKRIAEAAWQVNESTENIGARRLHTVLERLMEEISYDASDLSGQSITIDADYVSKHLDALVADEDLSRFIL</sequence>